<comment type="function">
    <text evidence="1">Allows the formation of correctly charged Asn-tRNA(Asn) or Gln-tRNA(Gln) through the transamidation of misacylated Asp-tRNA(Asn) or Glu-tRNA(Gln) in organisms which lack either or both of asparaginyl-tRNA or glutaminyl-tRNA synthetases. The reaction takes place in the presence of glutamine and ATP through an activated phospho-Asp-tRNA(Asn) or phospho-Glu-tRNA(Gln).</text>
</comment>
<comment type="catalytic activity">
    <reaction evidence="1">
        <text>L-glutamyl-tRNA(Gln) + L-glutamine + ATP + H2O = L-glutaminyl-tRNA(Gln) + L-glutamate + ADP + phosphate + H(+)</text>
        <dbReference type="Rhea" id="RHEA:17521"/>
        <dbReference type="Rhea" id="RHEA-COMP:9681"/>
        <dbReference type="Rhea" id="RHEA-COMP:9684"/>
        <dbReference type="ChEBI" id="CHEBI:15377"/>
        <dbReference type="ChEBI" id="CHEBI:15378"/>
        <dbReference type="ChEBI" id="CHEBI:29985"/>
        <dbReference type="ChEBI" id="CHEBI:30616"/>
        <dbReference type="ChEBI" id="CHEBI:43474"/>
        <dbReference type="ChEBI" id="CHEBI:58359"/>
        <dbReference type="ChEBI" id="CHEBI:78520"/>
        <dbReference type="ChEBI" id="CHEBI:78521"/>
        <dbReference type="ChEBI" id="CHEBI:456216"/>
    </reaction>
</comment>
<comment type="catalytic activity">
    <reaction evidence="1">
        <text>L-aspartyl-tRNA(Asn) + L-glutamine + ATP + H2O = L-asparaginyl-tRNA(Asn) + L-glutamate + ADP + phosphate + 2 H(+)</text>
        <dbReference type="Rhea" id="RHEA:14513"/>
        <dbReference type="Rhea" id="RHEA-COMP:9674"/>
        <dbReference type="Rhea" id="RHEA-COMP:9677"/>
        <dbReference type="ChEBI" id="CHEBI:15377"/>
        <dbReference type="ChEBI" id="CHEBI:15378"/>
        <dbReference type="ChEBI" id="CHEBI:29985"/>
        <dbReference type="ChEBI" id="CHEBI:30616"/>
        <dbReference type="ChEBI" id="CHEBI:43474"/>
        <dbReference type="ChEBI" id="CHEBI:58359"/>
        <dbReference type="ChEBI" id="CHEBI:78515"/>
        <dbReference type="ChEBI" id="CHEBI:78516"/>
        <dbReference type="ChEBI" id="CHEBI:456216"/>
    </reaction>
</comment>
<comment type="subunit">
    <text evidence="1">Heterotrimer of A, B and C subunits.</text>
</comment>
<comment type="similarity">
    <text evidence="1">Belongs to the GatB/GatE family. GatB subfamily.</text>
</comment>
<evidence type="ECO:0000255" key="1">
    <source>
        <dbReference type="HAMAP-Rule" id="MF_00121"/>
    </source>
</evidence>
<gene>
    <name evidence="1" type="primary">gatB</name>
    <name type="ordered locus">MGAS10270_Spy1574</name>
</gene>
<keyword id="KW-0067">ATP-binding</keyword>
<keyword id="KW-0436">Ligase</keyword>
<keyword id="KW-0547">Nucleotide-binding</keyword>
<keyword id="KW-0648">Protein biosynthesis</keyword>
<name>GATB_STRPD</name>
<protein>
    <recommendedName>
        <fullName evidence="1">Aspartyl/glutamyl-tRNA(Asn/Gln) amidotransferase subunit B</fullName>
        <shortName evidence="1">Asp/Glu-ADT subunit B</shortName>
        <ecNumber evidence="1">6.3.5.-</ecNumber>
    </recommendedName>
</protein>
<proteinExistence type="inferred from homology"/>
<accession>Q1JFC0</accession>
<sequence>MNFETIIGLEVHVELNTNSKIFSPSSAHFGEDPNANTNVIDWSFPGVLPVMNKGVIDAGIKAALALNMDIHKEMHFDRKNYFYPDNPKAYQISQFDEPIGYNGWIEIKLEDGSTKKIRIERAHLEEDAGKNTHGTDGYSYVDLNRQGVPLIEIVSEADMRSPEEAYAYLTALKEIIQYTGISDVKMEEGSMRVDANISLRPYGQEQFGTKTELKNLNSFSNVRKGLEFEVERQAKLLRSGGAIRQETRRYDEANKGTILMRVKEGAADYRYFPEPDLPLYEIDDAWIDEMRAQLPQFPAQRRAKYEEELGLSAYDASQLTATKALSDFFETAVSLGGDAKQVSNWLQGEVAQFLNAEGKTIEEIALTPENLVEMIAIIADGTISSKMAKKVFVHLAKNGGSARAYVEKAGLVQISDPAVLVPIIHQVFADNEAAVADFKSGKRNADKAFTGFLMKATKGQANPQVAQQLLAQELQKLRD</sequence>
<reference key="1">
    <citation type="journal article" date="2006" name="Proc. Natl. Acad. Sci. U.S.A.">
        <title>Molecular genetic anatomy of inter- and intraserotype variation in the human bacterial pathogen group A Streptococcus.</title>
        <authorList>
            <person name="Beres S.B."/>
            <person name="Richter E.W."/>
            <person name="Nagiec M.J."/>
            <person name="Sumby P."/>
            <person name="Porcella S.F."/>
            <person name="DeLeo F.R."/>
            <person name="Musser J.M."/>
        </authorList>
    </citation>
    <scope>NUCLEOTIDE SEQUENCE [LARGE SCALE GENOMIC DNA]</scope>
    <source>
        <strain>MGAS10270</strain>
    </source>
</reference>
<organism>
    <name type="scientific">Streptococcus pyogenes serotype M2 (strain MGAS10270)</name>
    <dbReference type="NCBI Taxonomy" id="370552"/>
    <lineage>
        <taxon>Bacteria</taxon>
        <taxon>Bacillati</taxon>
        <taxon>Bacillota</taxon>
        <taxon>Bacilli</taxon>
        <taxon>Lactobacillales</taxon>
        <taxon>Streptococcaceae</taxon>
        <taxon>Streptococcus</taxon>
    </lineage>
</organism>
<dbReference type="EC" id="6.3.5.-" evidence="1"/>
<dbReference type="EMBL" id="CP000260">
    <property type="protein sequence ID" value="ABF34639.1"/>
    <property type="molecule type" value="Genomic_DNA"/>
</dbReference>
<dbReference type="SMR" id="Q1JFC0"/>
<dbReference type="KEGG" id="sph:MGAS10270_Spy1574"/>
<dbReference type="HOGENOM" id="CLU_019240_0_0_9"/>
<dbReference type="Proteomes" id="UP000002436">
    <property type="component" value="Chromosome"/>
</dbReference>
<dbReference type="GO" id="GO:0050566">
    <property type="term" value="F:asparaginyl-tRNA synthase (glutamine-hydrolyzing) activity"/>
    <property type="evidence" value="ECO:0007669"/>
    <property type="project" value="RHEA"/>
</dbReference>
<dbReference type="GO" id="GO:0005524">
    <property type="term" value="F:ATP binding"/>
    <property type="evidence" value="ECO:0007669"/>
    <property type="project" value="UniProtKB-KW"/>
</dbReference>
<dbReference type="GO" id="GO:0050567">
    <property type="term" value="F:glutaminyl-tRNA synthase (glutamine-hydrolyzing) activity"/>
    <property type="evidence" value="ECO:0007669"/>
    <property type="project" value="UniProtKB-UniRule"/>
</dbReference>
<dbReference type="GO" id="GO:0070681">
    <property type="term" value="P:glutaminyl-tRNAGln biosynthesis via transamidation"/>
    <property type="evidence" value="ECO:0007669"/>
    <property type="project" value="TreeGrafter"/>
</dbReference>
<dbReference type="GO" id="GO:0006412">
    <property type="term" value="P:translation"/>
    <property type="evidence" value="ECO:0007669"/>
    <property type="project" value="UniProtKB-UniRule"/>
</dbReference>
<dbReference type="FunFam" id="1.10.10.410:FF:000001">
    <property type="entry name" value="Aspartyl/glutamyl-tRNA(Asn/Gln) amidotransferase subunit B"/>
    <property type="match status" value="1"/>
</dbReference>
<dbReference type="FunFam" id="1.10.150.380:FF:000001">
    <property type="entry name" value="Aspartyl/glutamyl-tRNA(Asn/Gln) amidotransferase subunit B"/>
    <property type="match status" value="1"/>
</dbReference>
<dbReference type="Gene3D" id="1.10.10.410">
    <property type="match status" value="1"/>
</dbReference>
<dbReference type="Gene3D" id="1.10.150.380">
    <property type="entry name" value="GatB domain, N-terminal subdomain"/>
    <property type="match status" value="1"/>
</dbReference>
<dbReference type="HAMAP" id="MF_00121">
    <property type="entry name" value="GatB"/>
    <property type="match status" value="1"/>
</dbReference>
<dbReference type="InterPro" id="IPR017959">
    <property type="entry name" value="Asn/Gln-tRNA_amidoTrfase_suB/E"/>
</dbReference>
<dbReference type="InterPro" id="IPR006075">
    <property type="entry name" value="Asn/Gln-tRNA_Trfase_suB/E_cat"/>
</dbReference>
<dbReference type="InterPro" id="IPR018027">
    <property type="entry name" value="Asn/Gln_amidotransferase"/>
</dbReference>
<dbReference type="InterPro" id="IPR003789">
    <property type="entry name" value="Asn/Gln_tRNA_amidoTrase-B-like"/>
</dbReference>
<dbReference type="InterPro" id="IPR004413">
    <property type="entry name" value="GatB"/>
</dbReference>
<dbReference type="InterPro" id="IPR042114">
    <property type="entry name" value="GatB_C_1"/>
</dbReference>
<dbReference type="InterPro" id="IPR023168">
    <property type="entry name" value="GatB_Yqey_C_2"/>
</dbReference>
<dbReference type="InterPro" id="IPR017958">
    <property type="entry name" value="Gln-tRNA_amidoTrfase_suB_CS"/>
</dbReference>
<dbReference type="InterPro" id="IPR014746">
    <property type="entry name" value="Gln_synth/guanido_kin_cat_dom"/>
</dbReference>
<dbReference type="NCBIfam" id="TIGR00133">
    <property type="entry name" value="gatB"/>
    <property type="match status" value="1"/>
</dbReference>
<dbReference type="NCBIfam" id="NF004011">
    <property type="entry name" value="PRK05477.1-1"/>
    <property type="match status" value="1"/>
</dbReference>
<dbReference type="NCBIfam" id="NF004012">
    <property type="entry name" value="PRK05477.1-2"/>
    <property type="match status" value="1"/>
</dbReference>
<dbReference type="NCBIfam" id="NF004014">
    <property type="entry name" value="PRK05477.1-4"/>
    <property type="match status" value="1"/>
</dbReference>
<dbReference type="PANTHER" id="PTHR11659">
    <property type="entry name" value="GLUTAMYL-TRNA GLN AMIDOTRANSFERASE SUBUNIT B MITOCHONDRIAL AND PROKARYOTIC PET112-RELATED"/>
    <property type="match status" value="1"/>
</dbReference>
<dbReference type="PANTHER" id="PTHR11659:SF0">
    <property type="entry name" value="GLUTAMYL-TRNA(GLN) AMIDOTRANSFERASE SUBUNIT B, MITOCHONDRIAL"/>
    <property type="match status" value="1"/>
</dbReference>
<dbReference type="Pfam" id="PF02934">
    <property type="entry name" value="GatB_N"/>
    <property type="match status" value="1"/>
</dbReference>
<dbReference type="Pfam" id="PF02637">
    <property type="entry name" value="GatB_Yqey"/>
    <property type="match status" value="1"/>
</dbReference>
<dbReference type="SMART" id="SM00845">
    <property type="entry name" value="GatB_Yqey"/>
    <property type="match status" value="1"/>
</dbReference>
<dbReference type="SUPFAM" id="SSF89095">
    <property type="entry name" value="GatB/YqeY motif"/>
    <property type="match status" value="1"/>
</dbReference>
<dbReference type="SUPFAM" id="SSF55931">
    <property type="entry name" value="Glutamine synthetase/guanido kinase"/>
    <property type="match status" value="1"/>
</dbReference>
<dbReference type="PROSITE" id="PS01234">
    <property type="entry name" value="GATB"/>
    <property type="match status" value="1"/>
</dbReference>
<feature type="chain" id="PRO_1000016046" description="Aspartyl/glutamyl-tRNA(Asn/Gln) amidotransferase subunit B">
    <location>
        <begin position="1"/>
        <end position="479"/>
    </location>
</feature>